<organism>
    <name type="scientific">Pan troglodytes</name>
    <name type="common">Chimpanzee</name>
    <dbReference type="NCBI Taxonomy" id="9598"/>
    <lineage>
        <taxon>Eukaryota</taxon>
        <taxon>Metazoa</taxon>
        <taxon>Chordata</taxon>
        <taxon>Craniata</taxon>
        <taxon>Vertebrata</taxon>
        <taxon>Euteleostomi</taxon>
        <taxon>Mammalia</taxon>
        <taxon>Eutheria</taxon>
        <taxon>Euarchontoglires</taxon>
        <taxon>Primates</taxon>
        <taxon>Haplorrhini</taxon>
        <taxon>Catarrhini</taxon>
        <taxon>Hominidae</taxon>
        <taxon>Pan</taxon>
    </lineage>
</organism>
<keyword id="KW-0007">Acetylation</keyword>
<keyword id="KW-0010">Activator</keyword>
<keyword id="KW-0131">Cell cycle</keyword>
<keyword id="KW-0132">Cell division</keyword>
<keyword id="KW-0238">DNA-binding</keyword>
<keyword id="KW-1017">Isopeptide bond</keyword>
<keyword id="KW-0479">Metal-binding</keyword>
<keyword id="KW-0497">Mitogen</keyword>
<keyword id="KW-0539">Nucleus</keyword>
<keyword id="KW-1185">Reference proteome</keyword>
<keyword id="KW-0677">Repeat</keyword>
<keyword id="KW-0804">Transcription</keyword>
<keyword id="KW-0805">Transcription regulation</keyword>
<keyword id="KW-0832">Ubl conjugation</keyword>
<keyword id="KW-0862">Zinc</keyword>
<keyword id="KW-0863">Zinc-finger</keyword>
<name>ZNF16_PANTR</name>
<dbReference type="EMBL" id="DQ977377">
    <property type="protein sequence ID" value="ABM92014.1"/>
    <property type="molecule type" value="Genomic_DNA"/>
</dbReference>
<dbReference type="STRING" id="9598.ENSPTRP00000054434"/>
<dbReference type="PaxDb" id="9598-ENSPTRP00000054434"/>
<dbReference type="eggNOG" id="KOG1721">
    <property type="taxonomic scope" value="Eukaryota"/>
</dbReference>
<dbReference type="InParanoid" id="A2T759"/>
<dbReference type="Proteomes" id="UP000002277">
    <property type="component" value="Unplaced"/>
</dbReference>
<dbReference type="GO" id="GO:0005634">
    <property type="term" value="C:nucleus"/>
    <property type="evidence" value="ECO:0000250"/>
    <property type="project" value="UniProtKB"/>
</dbReference>
<dbReference type="GO" id="GO:0000981">
    <property type="term" value="F:DNA-binding transcription factor activity, RNA polymerase II-specific"/>
    <property type="evidence" value="ECO:0000318"/>
    <property type="project" value="GO_Central"/>
</dbReference>
<dbReference type="GO" id="GO:0000978">
    <property type="term" value="F:RNA polymerase II cis-regulatory region sequence-specific DNA binding"/>
    <property type="evidence" value="ECO:0000318"/>
    <property type="project" value="GO_Central"/>
</dbReference>
<dbReference type="GO" id="GO:0008270">
    <property type="term" value="F:zinc ion binding"/>
    <property type="evidence" value="ECO:0007669"/>
    <property type="project" value="UniProtKB-KW"/>
</dbReference>
<dbReference type="GO" id="GO:0051301">
    <property type="term" value="P:cell division"/>
    <property type="evidence" value="ECO:0007669"/>
    <property type="project" value="UniProtKB-KW"/>
</dbReference>
<dbReference type="GO" id="GO:0072707">
    <property type="term" value="P:cellular response to sodium dodecyl sulfate"/>
    <property type="evidence" value="ECO:0000250"/>
    <property type="project" value="UniProtKB"/>
</dbReference>
<dbReference type="GO" id="GO:0043066">
    <property type="term" value="P:negative regulation of apoptotic process"/>
    <property type="evidence" value="ECO:0000250"/>
    <property type="project" value="UniProtKB"/>
</dbReference>
<dbReference type="GO" id="GO:1901989">
    <property type="term" value="P:positive regulation of cell cycle phase transition"/>
    <property type="evidence" value="ECO:0000250"/>
    <property type="project" value="UniProtKB"/>
</dbReference>
<dbReference type="GO" id="GO:0051781">
    <property type="term" value="P:positive regulation of cell division"/>
    <property type="evidence" value="ECO:0007669"/>
    <property type="project" value="UniProtKB-KW"/>
</dbReference>
<dbReference type="GO" id="GO:0008284">
    <property type="term" value="P:positive regulation of cell population proliferation"/>
    <property type="evidence" value="ECO:0000250"/>
    <property type="project" value="UniProtKB"/>
</dbReference>
<dbReference type="GO" id="GO:0045648">
    <property type="term" value="P:positive regulation of erythrocyte differentiation"/>
    <property type="evidence" value="ECO:0000250"/>
    <property type="project" value="UniProtKB"/>
</dbReference>
<dbReference type="GO" id="GO:0033674">
    <property type="term" value="P:positive regulation of kinase activity"/>
    <property type="evidence" value="ECO:0000250"/>
    <property type="project" value="UniProtKB"/>
</dbReference>
<dbReference type="GO" id="GO:0045654">
    <property type="term" value="P:positive regulation of megakaryocyte differentiation"/>
    <property type="evidence" value="ECO:0000250"/>
    <property type="project" value="UniProtKB"/>
</dbReference>
<dbReference type="GO" id="GO:0006357">
    <property type="term" value="P:regulation of transcription by RNA polymerase II"/>
    <property type="evidence" value="ECO:0000318"/>
    <property type="project" value="GO_Central"/>
</dbReference>
<dbReference type="FunFam" id="3.30.160.60:FF:000478">
    <property type="entry name" value="Zinc finger protein 133"/>
    <property type="match status" value="1"/>
</dbReference>
<dbReference type="FunFam" id="3.30.160.60:FF:000914">
    <property type="entry name" value="Zinc finger protein 16"/>
    <property type="match status" value="3"/>
</dbReference>
<dbReference type="FunFam" id="3.30.160.60:FF:001618">
    <property type="entry name" value="Zinc finger protein 16"/>
    <property type="match status" value="1"/>
</dbReference>
<dbReference type="FunFam" id="3.30.160.60:FF:001658">
    <property type="entry name" value="Zinc finger protein 16"/>
    <property type="match status" value="1"/>
</dbReference>
<dbReference type="FunFam" id="3.30.160.60:FF:001901">
    <property type="entry name" value="Zinc finger protein 16"/>
    <property type="match status" value="1"/>
</dbReference>
<dbReference type="FunFam" id="3.30.160.60:FF:001903">
    <property type="entry name" value="Zinc finger protein 16"/>
    <property type="match status" value="1"/>
</dbReference>
<dbReference type="FunFam" id="3.30.160.60:FF:002463">
    <property type="entry name" value="Zinc finger protein 16"/>
    <property type="match status" value="1"/>
</dbReference>
<dbReference type="FunFam" id="3.30.160.60:FF:002711">
    <property type="entry name" value="Zinc finger protein 16"/>
    <property type="match status" value="1"/>
</dbReference>
<dbReference type="FunFam" id="3.30.160.60:FF:000274">
    <property type="entry name" value="zinc finger protein 16"/>
    <property type="match status" value="1"/>
</dbReference>
<dbReference type="FunFam" id="3.30.160.60:FF:001298">
    <property type="entry name" value="zinc finger protein 23 isoform X1"/>
    <property type="match status" value="1"/>
</dbReference>
<dbReference type="FunFam" id="3.30.160.60:FF:002259">
    <property type="entry name" value="zinc finger protein 271"/>
    <property type="match status" value="1"/>
</dbReference>
<dbReference type="FunFam" id="3.30.160.60:FF:000269">
    <property type="entry name" value="Zinc finger protein 287"/>
    <property type="match status" value="1"/>
</dbReference>
<dbReference type="FunFam" id="3.30.160.60:FF:000352">
    <property type="entry name" value="zinc finger protein 3 homolog"/>
    <property type="match status" value="1"/>
</dbReference>
<dbReference type="FunFam" id="3.30.160.60:FF:002090">
    <property type="entry name" value="Zinc finger protein 473"/>
    <property type="match status" value="1"/>
</dbReference>
<dbReference type="FunFam" id="3.30.160.60:FF:000330">
    <property type="entry name" value="Zinc finger with KRAB and SCAN domains 1"/>
    <property type="match status" value="1"/>
</dbReference>
<dbReference type="Gene3D" id="3.30.160.60">
    <property type="entry name" value="Classic Zinc Finger"/>
    <property type="match status" value="17"/>
</dbReference>
<dbReference type="InterPro" id="IPR050717">
    <property type="entry name" value="C2H2-ZF_Transcription_Reg"/>
</dbReference>
<dbReference type="InterPro" id="IPR036236">
    <property type="entry name" value="Znf_C2H2_sf"/>
</dbReference>
<dbReference type="InterPro" id="IPR013087">
    <property type="entry name" value="Znf_C2H2_type"/>
</dbReference>
<dbReference type="PANTHER" id="PTHR14196">
    <property type="entry name" value="ODD-SKIPPED - RELATED"/>
    <property type="match status" value="1"/>
</dbReference>
<dbReference type="PANTHER" id="PTHR14196:SF12">
    <property type="entry name" value="ZINC FINGER PROTEIN 208-LIKE"/>
    <property type="match status" value="1"/>
</dbReference>
<dbReference type="Pfam" id="PF00096">
    <property type="entry name" value="zf-C2H2"/>
    <property type="match status" value="15"/>
</dbReference>
<dbReference type="SMART" id="SM00355">
    <property type="entry name" value="ZnF_C2H2"/>
    <property type="match status" value="17"/>
</dbReference>
<dbReference type="SUPFAM" id="SSF57667">
    <property type="entry name" value="beta-beta-alpha zinc fingers"/>
    <property type="match status" value="9"/>
</dbReference>
<dbReference type="PROSITE" id="PS00028">
    <property type="entry name" value="ZINC_FINGER_C2H2_1"/>
    <property type="match status" value="15"/>
</dbReference>
<dbReference type="PROSITE" id="PS50157">
    <property type="entry name" value="ZINC_FINGER_C2H2_2"/>
    <property type="match status" value="17"/>
</dbReference>
<sequence>MPSLRTRREEAEMELSAPGPSPWTPAAQARVSDAPAVTHPGSAACGTPCCSDTELEAICPHYQQPDCDTRTEDKEFLHKEDIHEDLESQAEISENYAGDVFQVPKLGDLCDDVSERDWGVPEGRRLPQSLSQEGDFTPAAMGLLRGPLGEKDLDCNGFDSRFSLSPNLMACQEIPXXERPHPYDMGGQSFQHSVDLTGHEGVPTAESPLICNECGKTFRGNPDLIQRQIVHTGEASFMCDDCGKTFSQNSVLKNRHRSHMSEKAYQCSECGKAFRGHSDFSRHQSHHSSERPYTCTECGKAFSQNSSLKKHQKSHMSEKPYECNECGKAFRRSSNLIQHQRIHSGEKPYVCSECGKAFRRSSNLIKHHRTHTGEKPFECGECGKAFSQSAHLRKHQRVHTGEKPYECNDCGKPFSRVSNLIKHHRVHTGEKPYKCSDCGKXFSQSSSLIQHRRIHTGEKPHVCNVCGKAFSYSSVLRKHQIIHTGEKPYRCSVCGKAFSHSSALIQHQGVHTGDKPYACHECGKTFGRSSNLILHQRVHTGEKPYECTECGKTFSQSSTLIQHQRIHNGLKPHECNQCGKAFNRSSNLIHHQKVHTGEKPYTCVECGKGFSQSSHLIQHQIIHTGERPYKCSECGKAFSQRSVLIQHQRIHTGVKPYDCAACGKAFSQRSKLIKHQLIHTRE</sequence>
<comment type="function">
    <text evidence="1">Acts as a transcriptional activator. Promotes cell proliferation by facilitating the cell cycle phase transition from the S to G2/M phase. Involved in both the hemin- and phorbol myristate acetate (PMA)-induced erythroid and megakaryocytic differentiation, respectively. Also plays a role as an inhibitor of cell apoptosis (By similarity).</text>
</comment>
<comment type="subunit">
    <text evidence="1">Interacts with INCA1; the interaction inhibits INCA1 activity and induces the cell cycle process.</text>
</comment>
<comment type="subcellular location">
    <subcellularLocation>
        <location evidence="1">Nucleus</location>
    </subcellularLocation>
</comment>
<comment type="similarity">
    <text evidence="5">Belongs to the krueppel C2H2-type zinc-finger protein family.</text>
</comment>
<accession>A2T759</accession>
<gene>
    <name type="primary">ZNF16</name>
</gene>
<proteinExistence type="inferred from homology"/>
<feature type="chain" id="PRO_0000285467" description="Zinc finger protein 16">
    <location>
        <begin position="1"/>
        <end position="682"/>
    </location>
</feature>
<feature type="zinc finger region" description="C2H2-type 1; degenerate" evidence="3">
    <location>
        <begin position="209"/>
        <end position="231"/>
    </location>
</feature>
<feature type="zinc finger region" description="C2H2-type 2; degenerate" evidence="3">
    <location>
        <begin position="237"/>
        <end position="259"/>
    </location>
</feature>
<feature type="zinc finger region" description="C2H2-type 3" evidence="3">
    <location>
        <begin position="265"/>
        <end position="287"/>
    </location>
</feature>
<feature type="zinc finger region" description="C2H2-type 4" evidence="3">
    <location>
        <begin position="293"/>
        <end position="315"/>
    </location>
</feature>
<feature type="zinc finger region" description="C2H2-type 5" evidence="3">
    <location>
        <begin position="321"/>
        <end position="343"/>
    </location>
</feature>
<feature type="zinc finger region" description="C2H2-type 6" evidence="3">
    <location>
        <begin position="349"/>
        <end position="371"/>
    </location>
</feature>
<feature type="zinc finger region" description="C2H2-type 7" evidence="3">
    <location>
        <begin position="377"/>
        <end position="399"/>
    </location>
</feature>
<feature type="zinc finger region" description="C2H2-type 8" evidence="3">
    <location>
        <begin position="405"/>
        <end position="427"/>
    </location>
</feature>
<feature type="zinc finger region" description="C2H2-type 9" evidence="3">
    <location>
        <begin position="433"/>
        <end position="455"/>
    </location>
</feature>
<feature type="zinc finger region" description="C2H2-type 10" evidence="3">
    <location>
        <begin position="461"/>
        <end position="483"/>
    </location>
</feature>
<feature type="zinc finger region" description="C2H2-type 11" evidence="3">
    <location>
        <begin position="489"/>
        <end position="511"/>
    </location>
</feature>
<feature type="zinc finger region" description="C2H2-type 12" evidence="3">
    <location>
        <begin position="517"/>
        <end position="539"/>
    </location>
</feature>
<feature type="zinc finger region" description="C2H2-type 13" evidence="3">
    <location>
        <begin position="545"/>
        <end position="567"/>
    </location>
</feature>
<feature type="zinc finger region" description="C2H2-type 14" evidence="3">
    <location>
        <begin position="573"/>
        <end position="595"/>
    </location>
</feature>
<feature type="zinc finger region" description="C2H2-type 15" evidence="3">
    <location>
        <begin position="601"/>
        <end position="623"/>
    </location>
</feature>
<feature type="zinc finger region" description="C2H2-type 16" evidence="3">
    <location>
        <begin position="629"/>
        <end position="651"/>
    </location>
</feature>
<feature type="zinc finger region" description="C2H2-type 17" evidence="3">
    <location>
        <begin position="657"/>
        <end position="679"/>
    </location>
</feature>
<feature type="region of interest" description="Disordered" evidence="4">
    <location>
        <begin position="1"/>
        <end position="38"/>
    </location>
</feature>
<feature type="region of interest" description="Necessary for transcription activation" evidence="1">
    <location>
        <begin position="62"/>
        <end position="210"/>
    </location>
</feature>
<feature type="region of interest" description="Required for nuclear localization" evidence="1">
    <location>
        <begin position="268"/>
        <end position="393"/>
    </location>
</feature>
<feature type="region of interest" description="Required for nuclear localization" evidence="1">
    <location>
        <begin position="341"/>
        <end position="373"/>
    </location>
</feature>
<feature type="region of interest" description="Required for nuclear localization" evidence="1">
    <location>
        <begin position="473"/>
        <end position="503"/>
    </location>
</feature>
<feature type="compositionally biased region" description="Basic and acidic residues" evidence="4">
    <location>
        <begin position="1"/>
        <end position="10"/>
    </location>
</feature>
<feature type="modified residue" description="N6-acetyllysine" evidence="2">
    <location>
        <position position="487"/>
    </location>
</feature>
<feature type="cross-link" description="Glycyl lysine isopeptide (Lys-Gly) (interchain with G-Cter in SUMO2)" evidence="2">
    <location>
        <position position="253"/>
    </location>
</feature>
<reference key="1">
    <citation type="submission" date="2006-08" db="EMBL/GenBank/DDBJ databases">
        <title>Positive selection in transcription factor genes on the human lineage.</title>
        <authorList>
            <person name="Nickel G.C."/>
            <person name="Tefft D.L."/>
            <person name="Trevarthen K."/>
            <person name="Funt J."/>
            <person name="Adams M.D."/>
        </authorList>
    </citation>
    <scope>NUCLEOTIDE SEQUENCE [GENOMIC DNA]</scope>
</reference>
<evidence type="ECO:0000250" key="1"/>
<evidence type="ECO:0000250" key="2">
    <source>
        <dbReference type="UniProtKB" id="P17020"/>
    </source>
</evidence>
<evidence type="ECO:0000255" key="3">
    <source>
        <dbReference type="PROSITE-ProRule" id="PRU00042"/>
    </source>
</evidence>
<evidence type="ECO:0000256" key="4">
    <source>
        <dbReference type="SAM" id="MobiDB-lite"/>
    </source>
</evidence>
<evidence type="ECO:0000305" key="5"/>
<protein>
    <recommendedName>
        <fullName>Zinc finger protein 16</fullName>
    </recommendedName>
</protein>